<proteinExistence type="inferred from homology"/>
<accession>C1DI55</accession>
<feature type="chain" id="PRO_1000202981" description="Deoxyuridine 5'-triphosphate nucleotidohydrolase">
    <location>
        <begin position="1"/>
        <end position="151"/>
    </location>
</feature>
<feature type="binding site" evidence="1">
    <location>
        <begin position="70"/>
        <end position="72"/>
    </location>
    <ligand>
        <name>substrate</name>
    </ligand>
</feature>
<feature type="binding site" evidence="1">
    <location>
        <position position="83"/>
    </location>
    <ligand>
        <name>substrate</name>
    </ligand>
</feature>
<feature type="binding site" evidence="1">
    <location>
        <begin position="87"/>
        <end position="89"/>
    </location>
    <ligand>
        <name>substrate</name>
    </ligand>
</feature>
<feature type="binding site" evidence="1">
    <location>
        <position position="97"/>
    </location>
    <ligand>
        <name>substrate</name>
    </ligand>
</feature>
<name>DUT_AZOVD</name>
<evidence type="ECO:0000255" key="1">
    <source>
        <dbReference type="HAMAP-Rule" id="MF_00116"/>
    </source>
</evidence>
<comment type="function">
    <text evidence="1">This enzyme is involved in nucleotide metabolism: it produces dUMP, the immediate precursor of thymidine nucleotides and it decreases the intracellular concentration of dUTP so that uracil cannot be incorporated into DNA.</text>
</comment>
<comment type="catalytic activity">
    <reaction evidence="1">
        <text>dUTP + H2O = dUMP + diphosphate + H(+)</text>
        <dbReference type="Rhea" id="RHEA:10248"/>
        <dbReference type="ChEBI" id="CHEBI:15377"/>
        <dbReference type="ChEBI" id="CHEBI:15378"/>
        <dbReference type="ChEBI" id="CHEBI:33019"/>
        <dbReference type="ChEBI" id="CHEBI:61555"/>
        <dbReference type="ChEBI" id="CHEBI:246422"/>
        <dbReference type="EC" id="3.6.1.23"/>
    </reaction>
</comment>
<comment type="cofactor">
    <cofactor evidence="1">
        <name>Mg(2+)</name>
        <dbReference type="ChEBI" id="CHEBI:18420"/>
    </cofactor>
</comment>
<comment type="pathway">
    <text evidence="1">Pyrimidine metabolism; dUMP biosynthesis; dUMP from dCTP (dUTP route): step 2/2.</text>
</comment>
<comment type="similarity">
    <text evidence="1">Belongs to the dUTPase family.</text>
</comment>
<protein>
    <recommendedName>
        <fullName evidence="1">Deoxyuridine 5'-triphosphate nucleotidohydrolase</fullName>
        <shortName evidence="1">dUTPase</shortName>
        <ecNumber evidence="1">3.6.1.23</ecNumber>
    </recommendedName>
    <alternativeName>
        <fullName evidence="1">dUTP pyrophosphatase</fullName>
    </alternativeName>
</protein>
<keyword id="KW-0378">Hydrolase</keyword>
<keyword id="KW-0460">Magnesium</keyword>
<keyword id="KW-0479">Metal-binding</keyword>
<keyword id="KW-0546">Nucleotide metabolism</keyword>
<organism>
    <name type="scientific">Azotobacter vinelandii (strain DJ / ATCC BAA-1303)</name>
    <dbReference type="NCBI Taxonomy" id="322710"/>
    <lineage>
        <taxon>Bacteria</taxon>
        <taxon>Pseudomonadati</taxon>
        <taxon>Pseudomonadota</taxon>
        <taxon>Gammaproteobacteria</taxon>
        <taxon>Pseudomonadales</taxon>
        <taxon>Pseudomonadaceae</taxon>
        <taxon>Azotobacter</taxon>
    </lineage>
</organism>
<sequence>MHSLQAKILDPRLGSDYPLPAYATAGSAGLDLRAMLQEELTLEPGQTALIPTGLAIHIADPGLAALVLPRSGLGHKHGIVLGNLVGLIDSDYQGELMISCWNRGQSTFRIAVGERIAQLVLVPVMQAHFQLVESFDESQRGAGGFGHSGSH</sequence>
<dbReference type="EC" id="3.6.1.23" evidence="1"/>
<dbReference type="EMBL" id="CP001157">
    <property type="protein sequence ID" value="ACO76552.1"/>
    <property type="molecule type" value="Genomic_DNA"/>
</dbReference>
<dbReference type="RefSeq" id="WP_012698980.1">
    <property type="nucleotide sequence ID" value="NC_012560.1"/>
</dbReference>
<dbReference type="SMR" id="C1DI55"/>
<dbReference type="STRING" id="322710.Avin_02920"/>
<dbReference type="EnsemblBacteria" id="ACO76552">
    <property type="protein sequence ID" value="ACO76552"/>
    <property type="gene ID" value="Avin_02920"/>
</dbReference>
<dbReference type="GeneID" id="88183745"/>
<dbReference type="KEGG" id="avn:Avin_02920"/>
<dbReference type="eggNOG" id="COG0756">
    <property type="taxonomic scope" value="Bacteria"/>
</dbReference>
<dbReference type="HOGENOM" id="CLU_068508_1_1_6"/>
<dbReference type="OrthoDB" id="9809956at2"/>
<dbReference type="UniPathway" id="UPA00610">
    <property type="reaction ID" value="UER00666"/>
</dbReference>
<dbReference type="Proteomes" id="UP000002424">
    <property type="component" value="Chromosome"/>
</dbReference>
<dbReference type="GO" id="GO:0004170">
    <property type="term" value="F:dUTP diphosphatase activity"/>
    <property type="evidence" value="ECO:0007669"/>
    <property type="project" value="UniProtKB-UniRule"/>
</dbReference>
<dbReference type="GO" id="GO:0000287">
    <property type="term" value="F:magnesium ion binding"/>
    <property type="evidence" value="ECO:0007669"/>
    <property type="project" value="UniProtKB-UniRule"/>
</dbReference>
<dbReference type="GO" id="GO:0006226">
    <property type="term" value="P:dUMP biosynthetic process"/>
    <property type="evidence" value="ECO:0007669"/>
    <property type="project" value="UniProtKB-UniRule"/>
</dbReference>
<dbReference type="GO" id="GO:0046081">
    <property type="term" value="P:dUTP catabolic process"/>
    <property type="evidence" value="ECO:0007669"/>
    <property type="project" value="InterPro"/>
</dbReference>
<dbReference type="CDD" id="cd07557">
    <property type="entry name" value="trimeric_dUTPase"/>
    <property type="match status" value="1"/>
</dbReference>
<dbReference type="FunFam" id="2.70.40.10:FF:000002">
    <property type="entry name" value="dUTP diphosphatase"/>
    <property type="match status" value="1"/>
</dbReference>
<dbReference type="Gene3D" id="2.70.40.10">
    <property type="match status" value="1"/>
</dbReference>
<dbReference type="HAMAP" id="MF_00116">
    <property type="entry name" value="dUTPase_bact"/>
    <property type="match status" value="1"/>
</dbReference>
<dbReference type="InterPro" id="IPR008181">
    <property type="entry name" value="dUTPase"/>
</dbReference>
<dbReference type="InterPro" id="IPR029054">
    <property type="entry name" value="dUTPase-like"/>
</dbReference>
<dbReference type="InterPro" id="IPR036157">
    <property type="entry name" value="dUTPase-like_sf"/>
</dbReference>
<dbReference type="InterPro" id="IPR033704">
    <property type="entry name" value="dUTPase_trimeric"/>
</dbReference>
<dbReference type="NCBIfam" id="TIGR00576">
    <property type="entry name" value="dut"/>
    <property type="match status" value="1"/>
</dbReference>
<dbReference type="NCBIfam" id="NF001862">
    <property type="entry name" value="PRK00601.1"/>
    <property type="match status" value="1"/>
</dbReference>
<dbReference type="PANTHER" id="PTHR11241">
    <property type="entry name" value="DEOXYURIDINE 5'-TRIPHOSPHATE NUCLEOTIDOHYDROLASE"/>
    <property type="match status" value="1"/>
</dbReference>
<dbReference type="PANTHER" id="PTHR11241:SF0">
    <property type="entry name" value="DEOXYURIDINE 5'-TRIPHOSPHATE NUCLEOTIDOHYDROLASE"/>
    <property type="match status" value="1"/>
</dbReference>
<dbReference type="Pfam" id="PF00692">
    <property type="entry name" value="dUTPase"/>
    <property type="match status" value="1"/>
</dbReference>
<dbReference type="SUPFAM" id="SSF51283">
    <property type="entry name" value="dUTPase-like"/>
    <property type="match status" value="1"/>
</dbReference>
<gene>
    <name evidence="1" type="primary">dut</name>
    <name type="ordered locus">Avin_02920</name>
</gene>
<reference key="1">
    <citation type="journal article" date="2009" name="J. Bacteriol.">
        <title>Genome sequence of Azotobacter vinelandii, an obligate aerobe specialized to support diverse anaerobic metabolic processes.</title>
        <authorList>
            <person name="Setubal J.C."/>
            <person name="Dos Santos P."/>
            <person name="Goldman B.S."/>
            <person name="Ertesvaag H."/>
            <person name="Espin G."/>
            <person name="Rubio L.M."/>
            <person name="Valla S."/>
            <person name="Almeida N.F."/>
            <person name="Balasubramanian D."/>
            <person name="Cromes L."/>
            <person name="Curatti L."/>
            <person name="Du Z."/>
            <person name="Godsy E."/>
            <person name="Goodner B."/>
            <person name="Hellner-Burris K."/>
            <person name="Hernandez J.A."/>
            <person name="Houmiel K."/>
            <person name="Imperial J."/>
            <person name="Kennedy C."/>
            <person name="Larson T.J."/>
            <person name="Latreille P."/>
            <person name="Ligon L.S."/>
            <person name="Lu J."/>
            <person name="Maerk M."/>
            <person name="Miller N.M."/>
            <person name="Norton S."/>
            <person name="O'Carroll I.P."/>
            <person name="Paulsen I."/>
            <person name="Raulfs E.C."/>
            <person name="Roemer R."/>
            <person name="Rosser J."/>
            <person name="Segura D."/>
            <person name="Slater S."/>
            <person name="Stricklin S.L."/>
            <person name="Studholme D.J."/>
            <person name="Sun J."/>
            <person name="Viana C.J."/>
            <person name="Wallin E."/>
            <person name="Wang B."/>
            <person name="Wheeler C."/>
            <person name="Zhu H."/>
            <person name="Dean D.R."/>
            <person name="Dixon R."/>
            <person name="Wood D."/>
        </authorList>
    </citation>
    <scope>NUCLEOTIDE SEQUENCE [LARGE SCALE GENOMIC DNA]</scope>
    <source>
        <strain>DJ / ATCC BAA-1303</strain>
    </source>
</reference>